<reference key="1">
    <citation type="journal article" date="2019" name="Toxicon">
        <title>Structural and functional characterization of toxic peptides purified from the venom of the Colombian scorpion Tityus macrochirus.</title>
        <authorList>
            <person name="Rincon-Cortes C.A."/>
            <person name="Olamendi-Portugal T."/>
            <person name="Carcamo-Noriega E.N."/>
            <person name="Santillan E.G."/>
            <person name="Zuniga F.Z."/>
            <person name="Reyes-Montano E.A."/>
            <person name="Vega Castro N.A."/>
            <person name="Possani L.D."/>
        </authorList>
    </citation>
    <scope>PROTEIN SEQUENCE</scope>
    <scope>FUNCTION</scope>
    <scope>SUBCELLULAR LOCATION</scope>
    <scope>TISSUE SPECIFICITY</scope>
    <source>
        <tissue evidence="3">Venom</tissue>
    </source>
</reference>
<dbReference type="SMR" id="C0HLM0"/>
<dbReference type="GO" id="GO:0005576">
    <property type="term" value="C:extracellular region"/>
    <property type="evidence" value="ECO:0000314"/>
    <property type="project" value="UniProtKB"/>
</dbReference>
<dbReference type="GO" id="GO:0019871">
    <property type="term" value="F:sodium channel inhibitor activity"/>
    <property type="evidence" value="ECO:0007669"/>
    <property type="project" value="InterPro"/>
</dbReference>
<dbReference type="GO" id="GO:0090729">
    <property type="term" value="F:toxin activity"/>
    <property type="evidence" value="ECO:0000314"/>
    <property type="project" value="UniProtKB"/>
</dbReference>
<dbReference type="GO" id="GO:0002213">
    <property type="term" value="P:defense response to insect"/>
    <property type="evidence" value="ECO:0000314"/>
    <property type="project" value="UniProtKB"/>
</dbReference>
<dbReference type="GO" id="GO:0044493">
    <property type="term" value="P:envenomation resulting in negative regulation of voltage-gated sodium channel activity in another organism"/>
    <property type="evidence" value="ECO:0000314"/>
    <property type="project" value="UniProtKB"/>
</dbReference>
<dbReference type="CDD" id="cd23106">
    <property type="entry name" value="neurotoxins_LC_scorpion"/>
    <property type="match status" value="1"/>
</dbReference>
<dbReference type="Gene3D" id="3.30.30.10">
    <property type="entry name" value="Knottin, scorpion toxin-like"/>
    <property type="match status" value="1"/>
</dbReference>
<dbReference type="InterPro" id="IPR044062">
    <property type="entry name" value="LCN-type_CS_alpha_beta_dom"/>
</dbReference>
<dbReference type="InterPro" id="IPR003614">
    <property type="entry name" value="Scorpion_toxin-like"/>
</dbReference>
<dbReference type="InterPro" id="IPR036574">
    <property type="entry name" value="Scorpion_toxin-like_sf"/>
</dbReference>
<dbReference type="InterPro" id="IPR018218">
    <property type="entry name" value="Scorpion_toxinL"/>
</dbReference>
<dbReference type="InterPro" id="IPR002061">
    <property type="entry name" value="Scorpion_toxinL/defensin"/>
</dbReference>
<dbReference type="Pfam" id="PF00537">
    <property type="entry name" value="Toxin_3"/>
    <property type="match status" value="1"/>
</dbReference>
<dbReference type="PRINTS" id="PR00285">
    <property type="entry name" value="SCORPNTOXIN"/>
</dbReference>
<dbReference type="SMART" id="SM00505">
    <property type="entry name" value="Knot1"/>
    <property type="match status" value="1"/>
</dbReference>
<dbReference type="SUPFAM" id="SSF57095">
    <property type="entry name" value="Scorpion toxin-like"/>
    <property type="match status" value="1"/>
</dbReference>
<dbReference type="PROSITE" id="PS51863">
    <property type="entry name" value="LCN_CSAB"/>
    <property type="match status" value="1"/>
</dbReference>
<accession>C0HLM0</accession>
<feature type="chain" id="PRO_0000448249" description="Toxin Tma2">
    <location>
        <begin position="1"/>
        <end position="69"/>
    </location>
</feature>
<feature type="domain" description="LCN-type CS-alpha/beta" evidence="1">
    <location>
        <begin position="2"/>
        <end position="66"/>
    </location>
</feature>
<feature type="disulfide bond" evidence="1">
    <location>
        <begin position="14"/>
        <end position="65"/>
    </location>
</feature>
<feature type="disulfide bond" evidence="1">
    <location>
        <begin position="18"/>
        <end position="41"/>
    </location>
</feature>
<feature type="disulfide bond" evidence="1">
    <location>
        <begin position="27"/>
        <end position="48"/>
    </location>
</feature>
<feature type="disulfide bond" evidence="1">
    <location>
        <begin position="31"/>
        <end position="50"/>
    </location>
</feature>
<organism evidence="3">
    <name type="scientific">Tityus macrochirus</name>
    <name type="common">Scorpion</name>
    <dbReference type="NCBI Taxonomy" id="2599738"/>
    <lineage>
        <taxon>Eukaryota</taxon>
        <taxon>Metazoa</taxon>
        <taxon>Ecdysozoa</taxon>
        <taxon>Arthropoda</taxon>
        <taxon>Chelicerata</taxon>
        <taxon>Arachnida</taxon>
        <taxon>Scorpiones</taxon>
        <taxon>Buthida</taxon>
        <taxon>Buthoidea</taxon>
        <taxon>Buthidae</taxon>
        <taxon>Tityus</taxon>
    </lineage>
</organism>
<proteinExistence type="evidence at protein level"/>
<name>SCX2_TITMA</name>
<sequence>KKDDYPVDTAERNCKFECNIVDDKGYCDNLCKGRKAEKGYCYSLKASCYCYGLPDDSPTKTSKRCNPNV</sequence>
<protein>
    <recommendedName>
        <fullName evidence="3">Toxin Tma2</fullName>
    </recommendedName>
</protein>
<evidence type="ECO:0000255" key="1">
    <source>
        <dbReference type="PROSITE-ProRule" id="PRU01210"/>
    </source>
</evidence>
<evidence type="ECO:0000269" key="2">
    <source>
    </source>
</evidence>
<evidence type="ECO:0000303" key="3">
    <source>
    </source>
</evidence>
<evidence type="ECO:0000305" key="4"/>
<evidence type="ECO:0000305" key="5">
    <source>
    </source>
</evidence>
<comment type="function">
    <text evidence="2">Inhibits voltage-gated sodium channels (Nav). This toxin shows insect lethality against crickets.</text>
</comment>
<comment type="subcellular location">
    <subcellularLocation>
        <location evidence="2">Secreted</location>
    </subcellularLocation>
</comment>
<comment type="tissue specificity">
    <text evidence="5">Expressed by the venom gland.</text>
</comment>
<comment type="domain">
    <text evidence="4">Has the structural arrangement of an alpha-helix connected to antiparallel beta-sheets by disulfide bonds (CS-alpha/beta).</text>
</comment>
<comment type="similarity">
    <text evidence="4">Belongs to the long (4 C-C) scorpion toxin superfamily. Sodium channel inhibitor family.</text>
</comment>
<keyword id="KW-0903">Direct protein sequencing</keyword>
<keyword id="KW-1015">Disulfide bond</keyword>
<keyword id="KW-0872">Ion channel impairing toxin</keyword>
<keyword id="KW-0528">Neurotoxin</keyword>
<keyword id="KW-0964">Secreted</keyword>
<keyword id="KW-0800">Toxin</keyword>
<keyword id="KW-0738">Voltage-gated sodium channel impairing toxin</keyword>